<dbReference type="EC" id="3.6.5.3" evidence="2"/>
<dbReference type="EMBL" id="AP008229">
    <property type="protein sequence ID" value="BAE70144.1"/>
    <property type="molecule type" value="Genomic_DNA"/>
</dbReference>
<dbReference type="EMBL" id="AP008229">
    <property type="protein sequence ID" value="BAE70156.1"/>
    <property type="molecule type" value="Genomic_DNA"/>
</dbReference>
<dbReference type="SMR" id="Q2NZX1"/>
<dbReference type="KEGG" id="xom:XOO3389"/>
<dbReference type="KEGG" id="xom:XOO3401"/>
<dbReference type="HOGENOM" id="CLU_007265_0_0_6"/>
<dbReference type="GO" id="GO:0005829">
    <property type="term" value="C:cytosol"/>
    <property type="evidence" value="ECO:0007669"/>
    <property type="project" value="TreeGrafter"/>
</dbReference>
<dbReference type="GO" id="GO:0005525">
    <property type="term" value="F:GTP binding"/>
    <property type="evidence" value="ECO:0007669"/>
    <property type="project" value="UniProtKB-UniRule"/>
</dbReference>
<dbReference type="GO" id="GO:0003924">
    <property type="term" value="F:GTPase activity"/>
    <property type="evidence" value="ECO:0007669"/>
    <property type="project" value="InterPro"/>
</dbReference>
<dbReference type="GO" id="GO:0097216">
    <property type="term" value="F:guanosine tetraphosphate binding"/>
    <property type="evidence" value="ECO:0007669"/>
    <property type="project" value="UniProtKB-ARBA"/>
</dbReference>
<dbReference type="GO" id="GO:0003746">
    <property type="term" value="F:translation elongation factor activity"/>
    <property type="evidence" value="ECO:0007669"/>
    <property type="project" value="UniProtKB-UniRule"/>
</dbReference>
<dbReference type="CDD" id="cd01884">
    <property type="entry name" value="EF_Tu"/>
    <property type="match status" value="1"/>
</dbReference>
<dbReference type="CDD" id="cd03697">
    <property type="entry name" value="EFTU_II"/>
    <property type="match status" value="1"/>
</dbReference>
<dbReference type="CDD" id="cd03707">
    <property type="entry name" value="EFTU_III"/>
    <property type="match status" value="1"/>
</dbReference>
<dbReference type="FunFam" id="2.40.30.10:FF:000001">
    <property type="entry name" value="Elongation factor Tu"/>
    <property type="match status" value="1"/>
</dbReference>
<dbReference type="FunFam" id="3.40.50.300:FF:000003">
    <property type="entry name" value="Elongation factor Tu"/>
    <property type="match status" value="1"/>
</dbReference>
<dbReference type="Gene3D" id="3.40.50.300">
    <property type="entry name" value="P-loop containing nucleotide triphosphate hydrolases"/>
    <property type="match status" value="1"/>
</dbReference>
<dbReference type="Gene3D" id="2.40.30.10">
    <property type="entry name" value="Translation factors"/>
    <property type="match status" value="2"/>
</dbReference>
<dbReference type="HAMAP" id="MF_00118_B">
    <property type="entry name" value="EF_Tu_B"/>
    <property type="match status" value="1"/>
</dbReference>
<dbReference type="InterPro" id="IPR041709">
    <property type="entry name" value="EF-Tu_GTP-bd"/>
</dbReference>
<dbReference type="InterPro" id="IPR050055">
    <property type="entry name" value="EF-Tu_GTPase"/>
</dbReference>
<dbReference type="InterPro" id="IPR004161">
    <property type="entry name" value="EFTu-like_2"/>
</dbReference>
<dbReference type="InterPro" id="IPR033720">
    <property type="entry name" value="EFTU_2"/>
</dbReference>
<dbReference type="InterPro" id="IPR031157">
    <property type="entry name" value="G_TR_CS"/>
</dbReference>
<dbReference type="InterPro" id="IPR027417">
    <property type="entry name" value="P-loop_NTPase"/>
</dbReference>
<dbReference type="InterPro" id="IPR005225">
    <property type="entry name" value="Small_GTP-bd"/>
</dbReference>
<dbReference type="InterPro" id="IPR000795">
    <property type="entry name" value="T_Tr_GTP-bd_dom"/>
</dbReference>
<dbReference type="InterPro" id="IPR009000">
    <property type="entry name" value="Transl_B-barrel_sf"/>
</dbReference>
<dbReference type="InterPro" id="IPR009001">
    <property type="entry name" value="Transl_elong_EF1A/Init_IF2_C"/>
</dbReference>
<dbReference type="InterPro" id="IPR004541">
    <property type="entry name" value="Transl_elong_EFTu/EF1A_bac/org"/>
</dbReference>
<dbReference type="InterPro" id="IPR004160">
    <property type="entry name" value="Transl_elong_EFTu/EF1A_C"/>
</dbReference>
<dbReference type="NCBIfam" id="TIGR00485">
    <property type="entry name" value="EF-Tu"/>
    <property type="match status" value="1"/>
</dbReference>
<dbReference type="NCBIfam" id="NF000766">
    <property type="entry name" value="PRK00049.1"/>
    <property type="match status" value="1"/>
</dbReference>
<dbReference type="NCBIfam" id="NF009372">
    <property type="entry name" value="PRK12735.1"/>
    <property type="match status" value="1"/>
</dbReference>
<dbReference type="NCBIfam" id="NF009373">
    <property type="entry name" value="PRK12736.1"/>
    <property type="match status" value="1"/>
</dbReference>
<dbReference type="NCBIfam" id="TIGR00231">
    <property type="entry name" value="small_GTP"/>
    <property type="match status" value="1"/>
</dbReference>
<dbReference type="PANTHER" id="PTHR43721:SF22">
    <property type="entry name" value="ELONGATION FACTOR TU, MITOCHONDRIAL"/>
    <property type="match status" value="1"/>
</dbReference>
<dbReference type="PANTHER" id="PTHR43721">
    <property type="entry name" value="ELONGATION FACTOR TU-RELATED"/>
    <property type="match status" value="1"/>
</dbReference>
<dbReference type="Pfam" id="PF00009">
    <property type="entry name" value="GTP_EFTU"/>
    <property type="match status" value="1"/>
</dbReference>
<dbReference type="Pfam" id="PF03144">
    <property type="entry name" value="GTP_EFTU_D2"/>
    <property type="match status" value="1"/>
</dbReference>
<dbReference type="Pfam" id="PF03143">
    <property type="entry name" value="GTP_EFTU_D3"/>
    <property type="match status" value="1"/>
</dbReference>
<dbReference type="PRINTS" id="PR00315">
    <property type="entry name" value="ELONGATNFCT"/>
</dbReference>
<dbReference type="SUPFAM" id="SSF50465">
    <property type="entry name" value="EF-Tu/eEF-1alpha/eIF2-gamma C-terminal domain"/>
    <property type="match status" value="1"/>
</dbReference>
<dbReference type="SUPFAM" id="SSF52540">
    <property type="entry name" value="P-loop containing nucleoside triphosphate hydrolases"/>
    <property type="match status" value="1"/>
</dbReference>
<dbReference type="SUPFAM" id="SSF50447">
    <property type="entry name" value="Translation proteins"/>
    <property type="match status" value="1"/>
</dbReference>
<dbReference type="PROSITE" id="PS00301">
    <property type="entry name" value="G_TR_1"/>
    <property type="match status" value="1"/>
</dbReference>
<dbReference type="PROSITE" id="PS51722">
    <property type="entry name" value="G_TR_2"/>
    <property type="match status" value="1"/>
</dbReference>
<accession>Q2NZX1</accession>
<reference key="1">
    <citation type="journal article" date="2005" name="Jpn. Agric. Res. Q.">
        <title>Genome sequence of Xanthomonas oryzae pv. oryzae suggests contribution of large numbers of effector genes and insertion sequences to its race diversity.</title>
        <authorList>
            <person name="Ochiai H."/>
            <person name="Inoue Y."/>
            <person name="Takeya M."/>
            <person name="Sasaki A."/>
            <person name="Kaku H."/>
        </authorList>
    </citation>
    <scope>NUCLEOTIDE SEQUENCE [LARGE SCALE GENOMIC DNA]</scope>
    <source>
        <strain>MAFF 311018</strain>
    </source>
</reference>
<organism>
    <name type="scientific">Xanthomonas oryzae pv. oryzae (strain MAFF 311018)</name>
    <dbReference type="NCBI Taxonomy" id="342109"/>
    <lineage>
        <taxon>Bacteria</taxon>
        <taxon>Pseudomonadati</taxon>
        <taxon>Pseudomonadota</taxon>
        <taxon>Gammaproteobacteria</taxon>
        <taxon>Lysobacterales</taxon>
        <taxon>Lysobacteraceae</taxon>
        <taxon>Xanthomonas</taxon>
    </lineage>
</organism>
<sequence length="396" mass="43080">MAKAKFERTKPHVNVGTIGHVDHGKTTLTAALTKIGAERFGGEFKAYDAIDAAPEEKARGITISTAHVEYESPSRHYAHVDCPGHADYVKNMITGAAQMDGAILVCSAADGPMPQTREHILLSRQVGVPHIVVFLNKADMVDDAELLELVEMEVRELLSKYDFPGDDTPIIHGSARLALDGDQSEIGVPAILKLVDALDTFIPEPTRDVDRPFLMPVEDVFSISGRGTVVTGRIERGIIKVGDEIEIVGIRATQKTTVTGVEMFRKLLDQGQAGDNAGLLLRGTKRDDVERGQVLCKPGSIKPHTEFEAEVYVLSKDEGGRHTPFFKGYRPQLYFRTTDITGAIDLPEGVEMVMPGDNVKMTVTLINPVAMDEGLRFAIREGGRTVGAGVVSKIIK</sequence>
<protein>
    <recommendedName>
        <fullName evidence="2">Elongation factor Tu</fullName>
        <shortName evidence="2">EF-Tu</shortName>
        <ecNumber evidence="2">3.6.5.3</ecNumber>
    </recommendedName>
</protein>
<comment type="function">
    <text evidence="2">GTP hydrolase that promotes the GTP-dependent binding of aminoacyl-tRNA to the A-site of ribosomes during protein biosynthesis.</text>
</comment>
<comment type="catalytic activity">
    <reaction evidence="2">
        <text>GTP + H2O = GDP + phosphate + H(+)</text>
        <dbReference type="Rhea" id="RHEA:19669"/>
        <dbReference type="ChEBI" id="CHEBI:15377"/>
        <dbReference type="ChEBI" id="CHEBI:15378"/>
        <dbReference type="ChEBI" id="CHEBI:37565"/>
        <dbReference type="ChEBI" id="CHEBI:43474"/>
        <dbReference type="ChEBI" id="CHEBI:58189"/>
        <dbReference type="EC" id="3.6.5.3"/>
    </reaction>
    <physiologicalReaction direction="left-to-right" evidence="2">
        <dbReference type="Rhea" id="RHEA:19670"/>
    </physiologicalReaction>
</comment>
<comment type="subunit">
    <text evidence="2">Monomer.</text>
</comment>
<comment type="subcellular location">
    <subcellularLocation>
        <location evidence="2">Cytoplasm</location>
    </subcellularLocation>
</comment>
<comment type="similarity">
    <text evidence="2">Belongs to the TRAFAC class translation factor GTPase superfamily. Classic translation factor GTPase family. EF-Tu/EF-1A subfamily.</text>
</comment>
<proteinExistence type="inferred from homology"/>
<feature type="chain" id="PRO_0000337581" description="Elongation factor Tu">
    <location>
        <begin position="1"/>
        <end position="396"/>
    </location>
</feature>
<feature type="domain" description="tr-type G">
    <location>
        <begin position="10"/>
        <end position="206"/>
    </location>
</feature>
<feature type="region of interest" description="G1" evidence="1">
    <location>
        <begin position="19"/>
        <end position="26"/>
    </location>
</feature>
<feature type="region of interest" description="G2" evidence="1">
    <location>
        <begin position="60"/>
        <end position="64"/>
    </location>
</feature>
<feature type="region of interest" description="G3" evidence="1">
    <location>
        <begin position="81"/>
        <end position="84"/>
    </location>
</feature>
<feature type="region of interest" description="G4" evidence="1">
    <location>
        <begin position="136"/>
        <end position="139"/>
    </location>
</feature>
<feature type="region of interest" description="G5" evidence="1">
    <location>
        <begin position="174"/>
        <end position="176"/>
    </location>
</feature>
<feature type="binding site" evidence="2">
    <location>
        <begin position="19"/>
        <end position="26"/>
    </location>
    <ligand>
        <name>GTP</name>
        <dbReference type="ChEBI" id="CHEBI:37565"/>
    </ligand>
</feature>
<feature type="binding site" evidence="2">
    <location>
        <position position="26"/>
    </location>
    <ligand>
        <name>Mg(2+)</name>
        <dbReference type="ChEBI" id="CHEBI:18420"/>
    </ligand>
</feature>
<feature type="binding site" evidence="2">
    <location>
        <begin position="81"/>
        <end position="85"/>
    </location>
    <ligand>
        <name>GTP</name>
        <dbReference type="ChEBI" id="CHEBI:37565"/>
    </ligand>
</feature>
<feature type="binding site" evidence="2">
    <location>
        <begin position="136"/>
        <end position="139"/>
    </location>
    <ligand>
        <name>GTP</name>
        <dbReference type="ChEBI" id="CHEBI:37565"/>
    </ligand>
</feature>
<keyword id="KW-0963">Cytoplasm</keyword>
<keyword id="KW-0251">Elongation factor</keyword>
<keyword id="KW-0342">GTP-binding</keyword>
<keyword id="KW-0378">Hydrolase</keyword>
<keyword id="KW-0460">Magnesium</keyword>
<keyword id="KW-0479">Metal-binding</keyword>
<keyword id="KW-0547">Nucleotide-binding</keyword>
<keyword id="KW-0648">Protein biosynthesis</keyword>
<name>EFTU_XANOM</name>
<gene>
    <name evidence="2" type="primary">tuf1</name>
    <name type="ordered locus">XOO3389</name>
</gene>
<gene>
    <name evidence="2" type="primary">tuf2</name>
    <name type="ordered locus">XOO3401</name>
</gene>
<evidence type="ECO:0000250" key="1"/>
<evidence type="ECO:0000255" key="2">
    <source>
        <dbReference type="HAMAP-Rule" id="MF_00118"/>
    </source>
</evidence>